<gene>
    <name evidence="1" type="primary">pqqD</name>
    <name type="ordered locus">PSPA7_3306</name>
</gene>
<comment type="function">
    <text evidence="1">Functions as a PqqA binding protein and presents PqqA to PqqE, in the pyrroloquinoline quinone (PQQ) biosynthetic pathway.</text>
</comment>
<comment type="pathway">
    <text evidence="1">Cofactor biosynthesis; pyrroloquinoline quinone biosynthesis.</text>
</comment>
<comment type="subunit">
    <text evidence="1">Monomer. Interacts with PqqE.</text>
</comment>
<comment type="similarity">
    <text evidence="1">Belongs to the PqqD family.</text>
</comment>
<evidence type="ECO:0000255" key="1">
    <source>
        <dbReference type="HAMAP-Rule" id="MF_00655"/>
    </source>
</evidence>
<sequence>MSLPSLDSVPVLRRGFRFQFEPAQDCHVLLYPEGMVKLNDSAGEILKLVDGRRDVAAIVAALRERFPEVPGIDEDILTFLEVAHAQFWIELQ</sequence>
<dbReference type="EMBL" id="CP000744">
    <property type="protein sequence ID" value="ABR80665.1"/>
    <property type="molecule type" value="Genomic_DNA"/>
</dbReference>
<dbReference type="RefSeq" id="WP_003157534.1">
    <property type="nucleotide sequence ID" value="NC_009656.1"/>
</dbReference>
<dbReference type="SMR" id="A6V6I1"/>
<dbReference type="KEGG" id="pap:PSPA7_3306"/>
<dbReference type="HOGENOM" id="CLU_163864_2_1_6"/>
<dbReference type="UniPathway" id="UPA00539"/>
<dbReference type="Proteomes" id="UP000001582">
    <property type="component" value="Chromosome"/>
</dbReference>
<dbReference type="GO" id="GO:0048038">
    <property type="term" value="F:quinone binding"/>
    <property type="evidence" value="ECO:0007669"/>
    <property type="project" value="InterPro"/>
</dbReference>
<dbReference type="GO" id="GO:0018189">
    <property type="term" value="P:pyrroloquinoline quinone biosynthetic process"/>
    <property type="evidence" value="ECO:0007669"/>
    <property type="project" value="UniProtKB-UniRule"/>
</dbReference>
<dbReference type="Gene3D" id="1.10.10.1150">
    <property type="entry name" value="Coenzyme PQQ synthesis protein D (PqqD)"/>
    <property type="match status" value="1"/>
</dbReference>
<dbReference type="HAMAP" id="MF_00655">
    <property type="entry name" value="PQQ_syn_PqqD"/>
    <property type="match status" value="1"/>
</dbReference>
<dbReference type="InterPro" id="IPR008792">
    <property type="entry name" value="PQQD"/>
</dbReference>
<dbReference type="InterPro" id="IPR022479">
    <property type="entry name" value="PqqD_bac"/>
</dbReference>
<dbReference type="InterPro" id="IPR041881">
    <property type="entry name" value="PqqD_sf"/>
</dbReference>
<dbReference type="NCBIfam" id="TIGR03859">
    <property type="entry name" value="PQQ_PqqD"/>
    <property type="match status" value="1"/>
</dbReference>
<dbReference type="NCBIfam" id="NF002535">
    <property type="entry name" value="PRK02079.1"/>
    <property type="match status" value="1"/>
</dbReference>
<dbReference type="Pfam" id="PF05402">
    <property type="entry name" value="PqqD"/>
    <property type="match status" value="1"/>
</dbReference>
<accession>A6V6I1</accession>
<keyword id="KW-0884">PQQ biosynthesis</keyword>
<feature type="chain" id="PRO_1000061684" description="PqqA binding protein">
    <location>
        <begin position="1"/>
        <end position="92"/>
    </location>
</feature>
<organism>
    <name type="scientific">Pseudomonas paraeruginosa (strain DSM 24068 / PA7)</name>
    <name type="common">Pseudomonas aeruginosa (strain PA7)</name>
    <dbReference type="NCBI Taxonomy" id="381754"/>
    <lineage>
        <taxon>Bacteria</taxon>
        <taxon>Pseudomonadati</taxon>
        <taxon>Pseudomonadota</taxon>
        <taxon>Gammaproteobacteria</taxon>
        <taxon>Pseudomonadales</taxon>
        <taxon>Pseudomonadaceae</taxon>
        <taxon>Pseudomonas</taxon>
        <taxon>Pseudomonas paraeruginosa</taxon>
    </lineage>
</organism>
<protein>
    <recommendedName>
        <fullName evidence="1">PqqA binding protein</fullName>
    </recommendedName>
    <alternativeName>
        <fullName evidence="1">Coenzyme PQQ synthesis protein D</fullName>
    </alternativeName>
    <alternativeName>
        <fullName evidence="1">Pyrroloquinoline quinone biosynthesis protein D</fullName>
    </alternativeName>
</protein>
<reference key="1">
    <citation type="submission" date="2007-06" db="EMBL/GenBank/DDBJ databases">
        <authorList>
            <person name="Dodson R.J."/>
            <person name="Harkins D."/>
            <person name="Paulsen I.T."/>
        </authorList>
    </citation>
    <scope>NUCLEOTIDE SEQUENCE [LARGE SCALE GENOMIC DNA]</scope>
    <source>
        <strain>DSM 24068 / PA7</strain>
    </source>
</reference>
<proteinExistence type="inferred from homology"/>
<name>PQQD_PSEP7</name>